<organism>
    <name type="scientific">Clostridium pasteurianum</name>
    <dbReference type="NCBI Taxonomy" id="1501"/>
    <lineage>
        <taxon>Bacteria</taxon>
        <taxon>Bacillati</taxon>
        <taxon>Bacillota</taxon>
        <taxon>Clostridia</taxon>
        <taxon>Eubacteriales</taxon>
        <taxon>Clostridiaceae</taxon>
        <taxon>Clostridium</taxon>
    </lineage>
</organism>
<protein>
    <recommendedName>
        <fullName>Unknown protein CP 6 from 2D-PAGE</fullName>
    </recommendedName>
</protein>
<reference key="1">
    <citation type="journal article" date="1998" name="Electrophoresis">
        <title>Two-dimensional gel electrophoresis separation and N-terminal sequence analysis of proteins from Clostridium pasteurianum W5.</title>
        <authorList>
            <person name="Flengsrud R."/>
            <person name="Skjeldal L."/>
        </authorList>
    </citation>
    <scope>PROTEIN SEQUENCE</scope>
    <source>
        <strain>ATCC 6013 / DSM 525 / NCIB 9486 / VKM B-1774 / W5</strain>
    </source>
</reference>
<accession>P81351</accession>
<comment type="miscellaneous">
    <text>On the 2D-gel the determined pI of this unknown protein is: 5.0, its MW is: 75.9 kDa.</text>
</comment>
<proteinExistence type="evidence at protein level"/>
<sequence>XNTAEI</sequence>
<name>UN06_CLOPA</name>
<keyword id="KW-0903">Direct protein sequencing</keyword>
<feature type="chain" id="PRO_0000055537" description="Unknown protein CP 6 from 2D-PAGE">
    <location>
        <begin position="1"/>
        <end position="6" status="greater than"/>
    </location>
</feature>
<feature type="non-terminal residue">
    <location>
        <position position="6"/>
    </location>
</feature>